<evidence type="ECO:0000255" key="1">
    <source>
        <dbReference type="HAMAP-Rule" id="MF_00380"/>
    </source>
</evidence>
<proteinExistence type="inferred from homology"/>
<keyword id="KW-0233">DNA recombination</keyword>
<keyword id="KW-0238">DNA-binding</keyword>
<keyword id="KW-1185">Reference proteome</keyword>
<keyword id="KW-0804">Transcription</keyword>
<keyword id="KW-0805">Transcription regulation</keyword>
<keyword id="KW-0810">Translation regulation</keyword>
<name>IHFA_RHIEC</name>
<comment type="function">
    <text evidence="1">This protein is one of the two subunits of integration host factor, a specific DNA-binding protein that functions in genetic recombination as well as in transcriptional and translational control.</text>
</comment>
<comment type="subunit">
    <text evidence="1">Heterodimer of an alpha and a beta chain.</text>
</comment>
<comment type="similarity">
    <text evidence="1">Belongs to the bacterial histone-like protein family.</text>
</comment>
<gene>
    <name evidence="1" type="primary">ihfA</name>
    <name evidence="1" type="synonym">himA</name>
    <name type="ordered locus">RHE_CH01533</name>
</gene>
<accession>Q2KA00</accession>
<sequence length="112" mass="12520">MTGKTVTRADLAESVFRKVGLSRTESAELVETVIDEICNAIVRGETVKLSSFATFQVRDKNERIGRNPKTGEEVPISPRRVMTFKASNVLKTRILKAHVTRKVKLKPQNPTP</sequence>
<feature type="chain" id="PRO_0000277764" description="Integration host factor subunit alpha">
    <location>
        <begin position="1"/>
        <end position="112"/>
    </location>
</feature>
<reference key="1">
    <citation type="journal article" date="2006" name="Proc. Natl. Acad. Sci. U.S.A.">
        <title>The partitioned Rhizobium etli genome: genetic and metabolic redundancy in seven interacting replicons.</title>
        <authorList>
            <person name="Gonzalez V."/>
            <person name="Santamaria R.I."/>
            <person name="Bustos P."/>
            <person name="Hernandez-Gonzalez I."/>
            <person name="Medrano-Soto A."/>
            <person name="Moreno-Hagelsieb G."/>
            <person name="Janga S.C."/>
            <person name="Ramirez M.A."/>
            <person name="Jimenez-Jacinto V."/>
            <person name="Collado-Vides J."/>
            <person name="Davila G."/>
        </authorList>
    </citation>
    <scope>NUCLEOTIDE SEQUENCE [LARGE SCALE GENOMIC DNA]</scope>
    <source>
        <strain>ATCC 51251 / DSM 11541 / JCM 21823 / NBRC 15573 / CFN 42</strain>
    </source>
</reference>
<protein>
    <recommendedName>
        <fullName evidence="1">Integration host factor subunit alpha</fullName>
        <shortName evidence="1">IHF-alpha</shortName>
    </recommendedName>
</protein>
<organism>
    <name type="scientific">Rhizobium etli (strain ATCC 51251 / DSM 11541 / JCM 21823 / NBRC 15573 / CFN 42)</name>
    <dbReference type="NCBI Taxonomy" id="347834"/>
    <lineage>
        <taxon>Bacteria</taxon>
        <taxon>Pseudomonadati</taxon>
        <taxon>Pseudomonadota</taxon>
        <taxon>Alphaproteobacteria</taxon>
        <taxon>Hyphomicrobiales</taxon>
        <taxon>Rhizobiaceae</taxon>
        <taxon>Rhizobium/Agrobacterium group</taxon>
        <taxon>Rhizobium</taxon>
    </lineage>
</organism>
<dbReference type="EMBL" id="CP000133">
    <property type="protein sequence ID" value="ABC90336.1"/>
    <property type="molecule type" value="Genomic_DNA"/>
</dbReference>
<dbReference type="RefSeq" id="WP_011424864.1">
    <property type="nucleotide sequence ID" value="NC_007761.1"/>
</dbReference>
<dbReference type="SMR" id="Q2KA00"/>
<dbReference type="KEGG" id="ret:RHE_CH01533"/>
<dbReference type="eggNOG" id="COG0776">
    <property type="taxonomic scope" value="Bacteria"/>
</dbReference>
<dbReference type="HOGENOM" id="CLU_105066_1_1_5"/>
<dbReference type="OrthoDB" id="9797747at2"/>
<dbReference type="Proteomes" id="UP000001936">
    <property type="component" value="Chromosome"/>
</dbReference>
<dbReference type="GO" id="GO:0005829">
    <property type="term" value="C:cytosol"/>
    <property type="evidence" value="ECO:0007669"/>
    <property type="project" value="TreeGrafter"/>
</dbReference>
<dbReference type="GO" id="GO:0003677">
    <property type="term" value="F:DNA binding"/>
    <property type="evidence" value="ECO:0007669"/>
    <property type="project" value="UniProtKB-UniRule"/>
</dbReference>
<dbReference type="GO" id="GO:0030527">
    <property type="term" value="F:structural constituent of chromatin"/>
    <property type="evidence" value="ECO:0007669"/>
    <property type="project" value="InterPro"/>
</dbReference>
<dbReference type="GO" id="GO:0006310">
    <property type="term" value="P:DNA recombination"/>
    <property type="evidence" value="ECO:0007669"/>
    <property type="project" value="UniProtKB-UniRule"/>
</dbReference>
<dbReference type="GO" id="GO:0009893">
    <property type="term" value="P:positive regulation of metabolic process"/>
    <property type="evidence" value="ECO:0007669"/>
    <property type="project" value="UniProtKB-ARBA"/>
</dbReference>
<dbReference type="GO" id="GO:0006355">
    <property type="term" value="P:regulation of DNA-templated transcription"/>
    <property type="evidence" value="ECO:0007669"/>
    <property type="project" value="UniProtKB-UniRule"/>
</dbReference>
<dbReference type="GO" id="GO:0006417">
    <property type="term" value="P:regulation of translation"/>
    <property type="evidence" value="ECO:0007669"/>
    <property type="project" value="UniProtKB-UniRule"/>
</dbReference>
<dbReference type="CDD" id="cd13835">
    <property type="entry name" value="IHF_A"/>
    <property type="match status" value="1"/>
</dbReference>
<dbReference type="Gene3D" id="4.10.520.10">
    <property type="entry name" value="IHF-like DNA-binding proteins"/>
    <property type="match status" value="1"/>
</dbReference>
<dbReference type="HAMAP" id="MF_00380">
    <property type="entry name" value="IHF_alpha"/>
    <property type="match status" value="1"/>
</dbReference>
<dbReference type="InterPro" id="IPR000119">
    <property type="entry name" value="Hist_DNA-bd"/>
</dbReference>
<dbReference type="InterPro" id="IPR020816">
    <property type="entry name" value="Histone-like_DNA-bd_CS"/>
</dbReference>
<dbReference type="InterPro" id="IPR010992">
    <property type="entry name" value="IHF-like_DNA-bd_dom_sf"/>
</dbReference>
<dbReference type="InterPro" id="IPR005684">
    <property type="entry name" value="IHF_alpha"/>
</dbReference>
<dbReference type="NCBIfam" id="TIGR00987">
    <property type="entry name" value="himA"/>
    <property type="match status" value="1"/>
</dbReference>
<dbReference type="NCBIfam" id="NF001401">
    <property type="entry name" value="PRK00285.1"/>
    <property type="match status" value="1"/>
</dbReference>
<dbReference type="PANTHER" id="PTHR33175">
    <property type="entry name" value="DNA-BINDING PROTEIN HU"/>
    <property type="match status" value="1"/>
</dbReference>
<dbReference type="PANTHER" id="PTHR33175:SF2">
    <property type="entry name" value="INTEGRATION HOST FACTOR SUBUNIT ALPHA"/>
    <property type="match status" value="1"/>
</dbReference>
<dbReference type="Pfam" id="PF00216">
    <property type="entry name" value="Bac_DNA_binding"/>
    <property type="match status" value="1"/>
</dbReference>
<dbReference type="PRINTS" id="PR01727">
    <property type="entry name" value="DNABINDINGHU"/>
</dbReference>
<dbReference type="SMART" id="SM00411">
    <property type="entry name" value="BHL"/>
    <property type="match status" value="1"/>
</dbReference>
<dbReference type="SUPFAM" id="SSF47729">
    <property type="entry name" value="IHF-like DNA-binding proteins"/>
    <property type="match status" value="1"/>
</dbReference>
<dbReference type="PROSITE" id="PS00045">
    <property type="entry name" value="HISTONE_LIKE"/>
    <property type="match status" value="1"/>
</dbReference>